<name>RL6_STRZP</name>
<organism>
    <name type="scientific">Streptococcus pneumoniae (strain P1031)</name>
    <dbReference type="NCBI Taxonomy" id="488223"/>
    <lineage>
        <taxon>Bacteria</taxon>
        <taxon>Bacillati</taxon>
        <taxon>Bacillota</taxon>
        <taxon>Bacilli</taxon>
        <taxon>Lactobacillales</taxon>
        <taxon>Streptococcaceae</taxon>
        <taxon>Streptococcus</taxon>
    </lineage>
</organism>
<comment type="function">
    <text evidence="1">This protein binds to the 23S rRNA, and is important in its secondary structure. It is located near the subunit interface in the base of the L7/L12 stalk, and near the tRNA binding site of the peptidyltransferase center.</text>
</comment>
<comment type="subunit">
    <text evidence="1">Part of the 50S ribosomal subunit.</text>
</comment>
<comment type="similarity">
    <text evidence="1">Belongs to the universal ribosomal protein uL6 family.</text>
</comment>
<protein>
    <recommendedName>
        <fullName evidence="1">Large ribosomal subunit protein uL6</fullName>
    </recommendedName>
    <alternativeName>
        <fullName evidence="2">50S ribosomal protein L6</fullName>
    </alternativeName>
</protein>
<reference key="1">
    <citation type="journal article" date="2010" name="Genome Biol.">
        <title>Structure and dynamics of the pan-genome of Streptococcus pneumoniae and closely related species.</title>
        <authorList>
            <person name="Donati C."/>
            <person name="Hiller N.L."/>
            <person name="Tettelin H."/>
            <person name="Muzzi A."/>
            <person name="Croucher N.J."/>
            <person name="Angiuoli S.V."/>
            <person name="Oggioni M."/>
            <person name="Dunning Hotopp J.C."/>
            <person name="Hu F.Z."/>
            <person name="Riley D.R."/>
            <person name="Covacci A."/>
            <person name="Mitchell T.J."/>
            <person name="Bentley S.D."/>
            <person name="Kilian M."/>
            <person name="Ehrlich G.D."/>
            <person name="Rappuoli R."/>
            <person name="Moxon E.R."/>
            <person name="Masignani V."/>
        </authorList>
    </citation>
    <scope>NUCLEOTIDE SEQUENCE [LARGE SCALE GENOMIC DNA]</scope>
    <source>
        <strain>P1031</strain>
    </source>
</reference>
<evidence type="ECO:0000255" key="1">
    <source>
        <dbReference type="HAMAP-Rule" id="MF_01365"/>
    </source>
</evidence>
<evidence type="ECO:0000305" key="2"/>
<dbReference type="EMBL" id="CP000920">
    <property type="protein sequence ID" value="ACO20837.1"/>
    <property type="molecule type" value="Genomic_DNA"/>
</dbReference>
<dbReference type="RefSeq" id="WP_000086633.1">
    <property type="nucleotide sequence ID" value="NC_012467.1"/>
</dbReference>
<dbReference type="SMR" id="C1CIB2"/>
<dbReference type="KEGG" id="spp:SPP_0275"/>
<dbReference type="HOGENOM" id="CLU_065464_1_2_9"/>
<dbReference type="GO" id="GO:0022625">
    <property type="term" value="C:cytosolic large ribosomal subunit"/>
    <property type="evidence" value="ECO:0007669"/>
    <property type="project" value="TreeGrafter"/>
</dbReference>
<dbReference type="GO" id="GO:0019843">
    <property type="term" value="F:rRNA binding"/>
    <property type="evidence" value="ECO:0007669"/>
    <property type="project" value="UniProtKB-UniRule"/>
</dbReference>
<dbReference type="GO" id="GO:0003735">
    <property type="term" value="F:structural constituent of ribosome"/>
    <property type="evidence" value="ECO:0007669"/>
    <property type="project" value="InterPro"/>
</dbReference>
<dbReference type="GO" id="GO:0002181">
    <property type="term" value="P:cytoplasmic translation"/>
    <property type="evidence" value="ECO:0007669"/>
    <property type="project" value="TreeGrafter"/>
</dbReference>
<dbReference type="FunFam" id="3.90.930.12:FF:000001">
    <property type="entry name" value="50S ribosomal protein L6"/>
    <property type="match status" value="1"/>
</dbReference>
<dbReference type="FunFam" id="3.90.930.12:FF:000002">
    <property type="entry name" value="50S ribosomal protein L6"/>
    <property type="match status" value="1"/>
</dbReference>
<dbReference type="Gene3D" id="3.90.930.12">
    <property type="entry name" value="Ribosomal protein L6, alpha-beta domain"/>
    <property type="match status" value="2"/>
</dbReference>
<dbReference type="HAMAP" id="MF_01365_B">
    <property type="entry name" value="Ribosomal_uL6_B"/>
    <property type="match status" value="1"/>
</dbReference>
<dbReference type="InterPro" id="IPR000702">
    <property type="entry name" value="Ribosomal_uL6-like"/>
</dbReference>
<dbReference type="InterPro" id="IPR036789">
    <property type="entry name" value="Ribosomal_uL6-like_a/b-dom_sf"/>
</dbReference>
<dbReference type="InterPro" id="IPR020040">
    <property type="entry name" value="Ribosomal_uL6_a/b-dom"/>
</dbReference>
<dbReference type="InterPro" id="IPR019906">
    <property type="entry name" value="Ribosomal_uL6_bac-type"/>
</dbReference>
<dbReference type="InterPro" id="IPR002358">
    <property type="entry name" value="Ribosomal_uL6_CS"/>
</dbReference>
<dbReference type="NCBIfam" id="TIGR03654">
    <property type="entry name" value="L6_bact"/>
    <property type="match status" value="1"/>
</dbReference>
<dbReference type="PANTHER" id="PTHR11655">
    <property type="entry name" value="60S/50S RIBOSOMAL PROTEIN L6/L9"/>
    <property type="match status" value="1"/>
</dbReference>
<dbReference type="PANTHER" id="PTHR11655:SF14">
    <property type="entry name" value="LARGE RIBOSOMAL SUBUNIT PROTEIN UL6M"/>
    <property type="match status" value="1"/>
</dbReference>
<dbReference type="Pfam" id="PF00347">
    <property type="entry name" value="Ribosomal_L6"/>
    <property type="match status" value="2"/>
</dbReference>
<dbReference type="PIRSF" id="PIRSF002162">
    <property type="entry name" value="Ribosomal_L6"/>
    <property type="match status" value="1"/>
</dbReference>
<dbReference type="PRINTS" id="PR00059">
    <property type="entry name" value="RIBOSOMALL6"/>
</dbReference>
<dbReference type="SUPFAM" id="SSF56053">
    <property type="entry name" value="Ribosomal protein L6"/>
    <property type="match status" value="2"/>
</dbReference>
<dbReference type="PROSITE" id="PS00525">
    <property type="entry name" value="RIBOSOMAL_L6_1"/>
    <property type="match status" value="1"/>
</dbReference>
<accession>C1CIB2</accession>
<proteinExistence type="inferred from homology"/>
<sequence>MSRIGNKVIVLPAGVELANNDNVVTVKGPKGELTREFSKDIEIRVEGTEVTLHRPNDSKEMKTIHGTTRALLNNMVVGVSEGFKKELEMRGVGYRAQLQGSKLVLAVGKSHPDEVEAPEGITFELPNPTTIVVSGISKEVVGQTAAYVRSLRSPEPYKGKGIRYVGEFVRRKEGKTGK</sequence>
<feature type="chain" id="PRO_1000166835" description="Large ribosomal subunit protein uL6">
    <location>
        <begin position="1"/>
        <end position="178"/>
    </location>
</feature>
<gene>
    <name evidence="1" type="primary">rplF</name>
    <name type="ordered locus">SPP_0275</name>
</gene>
<keyword id="KW-0687">Ribonucleoprotein</keyword>
<keyword id="KW-0689">Ribosomal protein</keyword>
<keyword id="KW-0694">RNA-binding</keyword>
<keyword id="KW-0699">rRNA-binding</keyword>